<accession>Q9W349</accession>
<accession>Q24183</accession>
<accession>Q9NHX9</accession>
<organism>
    <name type="scientific">Drosophila melanogaster</name>
    <name type="common">Fruit fly</name>
    <dbReference type="NCBI Taxonomy" id="7227"/>
    <lineage>
        <taxon>Eukaryota</taxon>
        <taxon>Metazoa</taxon>
        <taxon>Ecdysozoa</taxon>
        <taxon>Arthropoda</taxon>
        <taxon>Hexapoda</taxon>
        <taxon>Insecta</taxon>
        <taxon>Pterygota</taxon>
        <taxon>Neoptera</taxon>
        <taxon>Endopterygota</taxon>
        <taxon>Diptera</taxon>
        <taxon>Brachycera</taxon>
        <taxon>Muscomorpha</taxon>
        <taxon>Ephydroidea</taxon>
        <taxon>Drosophilidae</taxon>
        <taxon>Drosophila</taxon>
        <taxon>Sophophora</taxon>
    </lineage>
</organism>
<evidence type="ECO:0000255" key="1">
    <source>
        <dbReference type="PROSITE-ProRule" id="PRU00399"/>
    </source>
</evidence>
<evidence type="ECO:0000256" key="2">
    <source>
        <dbReference type="SAM" id="MobiDB-lite"/>
    </source>
</evidence>
<evidence type="ECO:0000269" key="3">
    <source>
    </source>
</evidence>
<evidence type="ECO:0000269" key="4">
    <source>
    </source>
</evidence>
<evidence type="ECO:0000269" key="5">
    <source>
    </source>
</evidence>
<evidence type="ECO:0000269" key="6">
    <source>
    </source>
</evidence>
<evidence type="ECO:0000305" key="7"/>
<keyword id="KW-0217">Developmental protein</keyword>
<keyword id="KW-0238">DNA-binding</keyword>
<keyword id="KW-0539">Nucleus</keyword>
<keyword id="KW-1185">Reference proteome</keyword>
<keyword id="KW-0804">Transcription</keyword>
<keyword id="KW-0805">Transcription regulation</keyword>
<name>LOZEN_DROME</name>
<sequence>MHLHLLAAEKTPPSPSPNPTPTPSASPSGHTGAAGESQLDLASQTESQLQLGLPLASGYGLGLGLGLGLGLGLGQELVADHSTTVAPVSVAGPGRLGRSINGSGGSHHHHHLHHHYSPYHHAHPYHPPHPHAPHHHHHHHPPYPYPPAGPHPPAMVTSSSTSPTGNGWSSSTGDFKGITAVATATGGGVGGATQGATASTGATAAEVLAVSSSASVGSSSPTGGASNGTAHSGHSGHTGGHSSSTASNNNNNGASNSNSNNNNAVHQDLLWMERLVQKRQQEHPGELVRTSNPYFLCSALPAHWRSNKTLPMAFKVVALAEVGDGTYVTIRAGNDENCCAELRNFTTQMKNDVAKFNDLRFVGRSGRGKSFTLTITVATSPPQVATYAKAIKVTVDGPREPRSKTSPTGGPHYRALGLGQRPYIDGFPSTKALHELESLRRSAKVAAVTTAAAAAATAASAANAVAAAAAAVAVTPTGGGGGVAAGGVAGGAGAGLVQQLSSNYSSPNSTINSDCQVYKPNAPHIQAAEMMGAGEWTNGSSSSAAAYYHSHAHHPHAHHAHAHLQHQMALPPPPPPPAAAPVSVGVGGNGATMGMGMGVGVGMGMNHYGGGYDSANSLEAGQYAAHLPAVLPEMHGHGFATDPYQTAGYGGGNTGGGSASKSELDYGGSYNQAWSNGYQNYQYGSCLATAQYGPQAAPPPQPPPPPPVVLCPQLYSTVNQNQIHLHLHSSEKLEQYLGTATSADHLTIGSLTGSSRSSIEIGQDQYHQQVHHAQQQQQQQQQQQQVHHPQQQQVESAGEVGGSGAGGVESAREEDVGDLSQVWRPY</sequence>
<protein>
    <recommendedName>
        <fullName>Protein lozenge</fullName>
    </recommendedName>
</protein>
<comment type="function">
    <text evidence="3 4 5 6">Involved in prepatterning photoreceptor precursors in the developing eye; in the larval eye disk it defines a subset of cells as an equipotential group that is competent to respond to the sevenless developmental signal and another subset that confer proper photoreceptor identity by positively regulating the homeo box gene Bar. Involved in the aop/pnt dynamic in a Ras-dependent manner to regulate pros expression. Promotes apoptosis in the pupal eye by directly activating aos and klu. Also modulates hid- and rpr-mediated cell death. Regulates amos function in olfactory sensilla development.</text>
</comment>
<comment type="subcellular location">
    <subcellularLocation>
        <location evidence="1">Nucleus</location>
    </subcellularLocation>
</comment>
<comment type="tissue specificity">
    <text evidence="4">Expressed in the pupal eye during programmed cell death.</text>
</comment>
<reference key="1">
    <citation type="journal article" date="1996" name="Genes Dev.">
        <title>Patterning of cells in the Drosophila eye by Lozenge, which shares homologous domains with AML1.</title>
        <authorList>
            <person name="Daga A."/>
            <person name="Karlovich C.A."/>
            <person name="Dumstrei K."/>
            <person name="Banerjee U."/>
        </authorList>
    </citation>
    <scope>NUCLEOTIDE SEQUENCE [MRNA]</scope>
    <scope>FUNCTION</scope>
</reference>
<reference key="2">
    <citation type="journal article" date="2002" name="Dev. Genes Evol.">
        <title>Yan regulates Lozenge during Drosophila eye development.</title>
        <authorList>
            <person name="Behan K.J."/>
            <person name="Nichols C.D."/>
            <person name="Cheung T.L."/>
            <person name="Farlow A."/>
            <person name="Hogan B.M."/>
            <person name="Batterham P."/>
            <person name="Pollock J.A."/>
        </authorList>
    </citation>
    <scope>NUCLEOTIDE SEQUENCE [GENOMIC DNA]</scope>
    <scope>FUNCTION</scope>
    <scope>TISSUE SPECIFICITY</scope>
</reference>
<reference key="3">
    <citation type="journal article" date="2000" name="Science">
        <title>The genome sequence of Drosophila melanogaster.</title>
        <authorList>
            <person name="Adams M.D."/>
            <person name="Celniker S.E."/>
            <person name="Holt R.A."/>
            <person name="Evans C.A."/>
            <person name="Gocayne J.D."/>
            <person name="Amanatides P.G."/>
            <person name="Scherer S.E."/>
            <person name="Li P.W."/>
            <person name="Hoskins R.A."/>
            <person name="Galle R.F."/>
            <person name="George R.A."/>
            <person name="Lewis S.E."/>
            <person name="Richards S."/>
            <person name="Ashburner M."/>
            <person name="Henderson S.N."/>
            <person name="Sutton G.G."/>
            <person name="Wortman J.R."/>
            <person name="Yandell M.D."/>
            <person name="Zhang Q."/>
            <person name="Chen L.X."/>
            <person name="Brandon R.C."/>
            <person name="Rogers Y.-H.C."/>
            <person name="Blazej R.G."/>
            <person name="Champe M."/>
            <person name="Pfeiffer B.D."/>
            <person name="Wan K.H."/>
            <person name="Doyle C."/>
            <person name="Baxter E.G."/>
            <person name="Helt G."/>
            <person name="Nelson C.R."/>
            <person name="Miklos G.L.G."/>
            <person name="Abril J.F."/>
            <person name="Agbayani A."/>
            <person name="An H.-J."/>
            <person name="Andrews-Pfannkoch C."/>
            <person name="Baldwin D."/>
            <person name="Ballew R.M."/>
            <person name="Basu A."/>
            <person name="Baxendale J."/>
            <person name="Bayraktaroglu L."/>
            <person name="Beasley E.M."/>
            <person name="Beeson K.Y."/>
            <person name="Benos P.V."/>
            <person name="Berman B.P."/>
            <person name="Bhandari D."/>
            <person name="Bolshakov S."/>
            <person name="Borkova D."/>
            <person name="Botchan M.R."/>
            <person name="Bouck J."/>
            <person name="Brokstein P."/>
            <person name="Brottier P."/>
            <person name="Burtis K.C."/>
            <person name="Busam D.A."/>
            <person name="Butler H."/>
            <person name="Cadieu E."/>
            <person name="Center A."/>
            <person name="Chandra I."/>
            <person name="Cherry J.M."/>
            <person name="Cawley S."/>
            <person name="Dahlke C."/>
            <person name="Davenport L.B."/>
            <person name="Davies P."/>
            <person name="de Pablos B."/>
            <person name="Delcher A."/>
            <person name="Deng Z."/>
            <person name="Mays A.D."/>
            <person name="Dew I."/>
            <person name="Dietz S.M."/>
            <person name="Dodson K."/>
            <person name="Doup L.E."/>
            <person name="Downes M."/>
            <person name="Dugan-Rocha S."/>
            <person name="Dunkov B.C."/>
            <person name="Dunn P."/>
            <person name="Durbin K.J."/>
            <person name="Evangelista C.C."/>
            <person name="Ferraz C."/>
            <person name="Ferriera S."/>
            <person name="Fleischmann W."/>
            <person name="Fosler C."/>
            <person name="Gabrielian A.E."/>
            <person name="Garg N.S."/>
            <person name="Gelbart W.M."/>
            <person name="Glasser K."/>
            <person name="Glodek A."/>
            <person name="Gong F."/>
            <person name="Gorrell J.H."/>
            <person name="Gu Z."/>
            <person name="Guan P."/>
            <person name="Harris M."/>
            <person name="Harris N.L."/>
            <person name="Harvey D.A."/>
            <person name="Heiman T.J."/>
            <person name="Hernandez J.R."/>
            <person name="Houck J."/>
            <person name="Hostin D."/>
            <person name="Houston K.A."/>
            <person name="Howland T.J."/>
            <person name="Wei M.-H."/>
            <person name="Ibegwam C."/>
            <person name="Jalali M."/>
            <person name="Kalush F."/>
            <person name="Karpen G.H."/>
            <person name="Ke Z."/>
            <person name="Kennison J.A."/>
            <person name="Ketchum K.A."/>
            <person name="Kimmel B.E."/>
            <person name="Kodira C.D."/>
            <person name="Kraft C.L."/>
            <person name="Kravitz S."/>
            <person name="Kulp D."/>
            <person name="Lai Z."/>
            <person name="Lasko P."/>
            <person name="Lei Y."/>
            <person name="Levitsky A.A."/>
            <person name="Li J.H."/>
            <person name="Li Z."/>
            <person name="Liang Y."/>
            <person name="Lin X."/>
            <person name="Liu X."/>
            <person name="Mattei B."/>
            <person name="McIntosh T.C."/>
            <person name="McLeod M.P."/>
            <person name="McPherson D."/>
            <person name="Merkulov G."/>
            <person name="Milshina N.V."/>
            <person name="Mobarry C."/>
            <person name="Morris J."/>
            <person name="Moshrefi A."/>
            <person name="Mount S.M."/>
            <person name="Moy M."/>
            <person name="Murphy B."/>
            <person name="Murphy L."/>
            <person name="Muzny D.M."/>
            <person name="Nelson D.L."/>
            <person name="Nelson D.R."/>
            <person name="Nelson K.A."/>
            <person name="Nixon K."/>
            <person name="Nusskern D.R."/>
            <person name="Pacleb J.M."/>
            <person name="Palazzolo M."/>
            <person name="Pittman G.S."/>
            <person name="Pan S."/>
            <person name="Pollard J."/>
            <person name="Puri V."/>
            <person name="Reese M.G."/>
            <person name="Reinert K."/>
            <person name="Remington K."/>
            <person name="Saunders R.D.C."/>
            <person name="Scheeler F."/>
            <person name="Shen H."/>
            <person name="Shue B.C."/>
            <person name="Siden-Kiamos I."/>
            <person name="Simpson M."/>
            <person name="Skupski M.P."/>
            <person name="Smith T.J."/>
            <person name="Spier E."/>
            <person name="Spradling A.C."/>
            <person name="Stapleton M."/>
            <person name="Strong R."/>
            <person name="Sun E."/>
            <person name="Svirskas R."/>
            <person name="Tector C."/>
            <person name="Turner R."/>
            <person name="Venter E."/>
            <person name="Wang A.H."/>
            <person name="Wang X."/>
            <person name="Wang Z.-Y."/>
            <person name="Wassarman D.A."/>
            <person name="Weinstock G.M."/>
            <person name="Weissenbach J."/>
            <person name="Williams S.M."/>
            <person name="Woodage T."/>
            <person name="Worley K.C."/>
            <person name="Wu D."/>
            <person name="Yang S."/>
            <person name="Yao Q.A."/>
            <person name="Ye J."/>
            <person name="Yeh R.-F."/>
            <person name="Zaveri J.S."/>
            <person name="Zhan M."/>
            <person name="Zhang G."/>
            <person name="Zhao Q."/>
            <person name="Zheng L."/>
            <person name="Zheng X.H."/>
            <person name="Zhong F.N."/>
            <person name="Zhong W."/>
            <person name="Zhou X."/>
            <person name="Zhu S.C."/>
            <person name="Zhu X."/>
            <person name="Smith H.O."/>
            <person name="Gibbs R.A."/>
            <person name="Myers E.W."/>
            <person name="Rubin G.M."/>
            <person name="Venter J.C."/>
        </authorList>
    </citation>
    <scope>NUCLEOTIDE SEQUENCE [LARGE SCALE GENOMIC DNA]</scope>
    <source>
        <strain>Berkeley</strain>
    </source>
</reference>
<reference key="4">
    <citation type="journal article" date="2002" name="Genome Biol.">
        <title>Annotation of the Drosophila melanogaster euchromatic genome: a systematic review.</title>
        <authorList>
            <person name="Misra S."/>
            <person name="Crosby M.A."/>
            <person name="Mungall C.J."/>
            <person name="Matthews B.B."/>
            <person name="Campbell K.S."/>
            <person name="Hradecky P."/>
            <person name="Huang Y."/>
            <person name="Kaminker J.S."/>
            <person name="Millburn G.H."/>
            <person name="Prochnik S.E."/>
            <person name="Smith C.D."/>
            <person name="Tupy J.L."/>
            <person name="Whitfield E.J."/>
            <person name="Bayraktaroglu L."/>
            <person name="Berman B.P."/>
            <person name="Bettencourt B.R."/>
            <person name="Celniker S.E."/>
            <person name="de Grey A.D.N.J."/>
            <person name="Drysdale R.A."/>
            <person name="Harris N.L."/>
            <person name="Richter J."/>
            <person name="Russo S."/>
            <person name="Schroeder A.J."/>
            <person name="Shu S.Q."/>
            <person name="Stapleton M."/>
            <person name="Yamada C."/>
            <person name="Ashburner M."/>
            <person name="Gelbart W.M."/>
            <person name="Rubin G.M."/>
            <person name="Lewis S.E."/>
        </authorList>
    </citation>
    <scope>GENOME REANNOTATION</scope>
    <source>
        <strain>Berkeley</strain>
    </source>
</reference>
<reference key="5">
    <citation type="journal article" date="2000" name="Neuron">
        <title>Amos, a proneural gene for Drosophila olfactory sense organs that is regulated by lozenge.</title>
        <authorList>
            <person name="Goulding S.E."/>
            <person name="zur Lage P."/>
            <person name="Jarman A.P."/>
        </authorList>
    </citation>
    <scope>FUNCTION</scope>
</reference>
<reference key="6">
    <citation type="journal article" date="2005" name="Genes Dev.">
        <title>Lozenge directly activates argos and klumpfuss to regulate programmed cell death.</title>
        <authorList>
            <person name="Wildonger J."/>
            <person name="Sosinsky A."/>
            <person name="Honig B."/>
            <person name="Mann R.S."/>
        </authorList>
    </citation>
    <scope>FUNCTION</scope>
</reference>
<proteinExistence type="evidence at transcript level"/>
<feature type="chain" id="PRO_0000174666" description="Protein lozenge">
    <location>
        <begin position="1"/>
        <end position="826"/>
    </location>
</feature>
<feature type="domain" description="Runt" evidence="1">
    <location>
        <begin position="275"/>
        <end position="403"/>
    </location>
</feature>
<feature type="region of interest" description="Disordered" evidence="2">
    <location>
        <begin position="1"/>
        <end position="45"/>
    </location>
</feature>
<feature type="region of interest" description="Disordered" evidence="2">
    <location>
        <begin position="87"/>
        <end position="171"/>
    </location>
</feature>
<feature type="region of interest" description="Disordered" evidence="2">
    <location>
        <begin position="214"/>
        <end position="263"/>
    </location>
</feature>
<feature type="region of interest" description="Disordered" evidence="2">
    <location>
        <begin position="774"/>
        <end position="826"/>
    </location>
</feature>
<feature type="compositionally biased region" description="Pro residues" evidence="2">
    <location>
        <begin position="12"/>
        <end position="24"/>
    </location>
</feature>
<feature type="compositionally biased region" description="Basic residues" evidence="2">
    <location>
        <begin position="106"/>
        <end position="141"/>
    </location>
</feature>
<feature type="compositionally biased region" description="Pro residues" evidence="2">
    <location>
        <begin position="142"/>
        <end position="153"/>
    </location>
</feature>
<feature type="compositionally biased region" description="Polar residues" evidence="2">
    <location>
        <begin position="156"/>
        <end position="171"/>
    </location>
</feature>
<feature type="compositionally biased region" description="Low complexity" evidence="2">
    <location>
        <begin position="774"/>
        <end position="798"/>
    </location>
</feature>
<feature type="sequence conflict" description="In Ref. 1; AAC47196." evidence="7" ref="1">
    <original>A</original>
    <variation>V</variation>
    <location>
        <position position="8"/>
    </location>
</feature>
<feature type="sequence conflict" description="In Ref. 1; AAC47196." evidence="7" ref="1">
    <original>S</original>
    <variation>F</variation>
    <location>
        <position position="16"/>
    </location>
</feature>
<feature type="sequence conflict" description="In Ref. 1." evidence="7" ref="1">
    <original>N</original>
    <variation>NNNN</variation>
    <location>
        <position position="252"/>
    </location>
</feature>
<feature type="sequence conflict" description="In Ref. 1; AAC47196." evidence="7" ref="1">
    <original>EL</original>
    <variation>DV</variation>
    <location>
        <begin position="341"/>
        <end position="342"/>
    </location>
</feature>
<gene>
    <name type="primary">lz</name>
    <name type="ORF">CG1689</name>
</gene>
<dbReference type="EMBL" id="U47849">
    <property type="protein sequence ID" value="AAC47196.2"/>
    <property type="molecule type" value="mRNA"/>
</dbReference>
<dbReference type="EMBL" id="AF217651">
    <property type="protein sequence ID" value="AAF35308.1"/>
    <property type="molecule type" value="Genomic_DNA"/>
</dbReference>
<dbReference type="EMBL" id="AE014298">
    <property type="protein sequence ID" value="AAF46486.2"/>
    <property type="molecule type" value="Genomic_DNA"/>
</dbReference>
<dbReference type="RefSeq" id="NP_511099.2">
    <property type="nucleotide sequence ID" value="NM_078544.3"/>
</dbReference>
<dbReference type="SMR" id="Q9W349"/>
<dbReference type="BioGRID" id="58331">
    <property type="interactions" value="22"/>
</dbReference>
<dbReference type="ELM" id="Q9W349"/>
<dbReference type="FunCoup" id="Q9W349">
    <property type="interactions" value="255"/>
</dbReference>
<dbReference type="STRING" id="7227.FBpp0071255"/>
<dbReference type="GlyGen" id="Q9W349">
    <property type="glycosylation" value="4 sites"/>
</dbReference>
<dbReference type="PaxDb" id="7227-FBpp0071255"/>
<dbReference type="EnsemblMetazoa" id="FBtr0071320">
    <property type="protein sequence ID" value="FBpp0071255"/>
    <property type="gene ID" value="FBgn0002576"/>
</dbReference>
<dbReference type="GeneID" id="31883"/>
<dbReference type="KEGG" id="dme:Dmel_CG1689"/>
<dbReference type="UCSC" id="CG1689-RA">
    <property type="organism name" value="d. melanogaster"/>
</dbReference>
<dbReference type="AGR" id="FB:FBgn0002576"/>
<dbReference type="CTD" id="17106"/>
<dbReference type="FlyBase" id="FBgn0002576">
    <property type="gene designation" value="lz"/>
</dbReference>
<dbReference type="VEuPathDB" id="VectorBase:FBgn0002576"/>
<dbReference type="eggNOG" id="KOG3982">
    <property type="taxonomic scope" value="Eukaryota"/>
</dbReference>
<dbReference type="GeneTree" id="ENSGT00940000159255"/>
<dbReference type="HOGENOM" id="CLU_016277_0_0_1"/>
<dbReference type="InParanoid" id="Q9W349"/>
<dbReference type="OMA" id="YNNAAAW"/>
<dbReference type="OrthoDB" id="10029800at2759"/>
<dbReference type="PhylomeDB" id="Q9W349"/>
<dbReference type="Reactome" id="R-DME-8878166">
    <property type="pathway name" value="Transcriptional regulation by RUNX2"/>
</dbReference>
<dbReference type="Reactome" id="R-DME-8939902">
    <property type="pathway name" value="Regulation of RUNX2 expression and activity"/>
</dbReference>
<dbReference type="Reactome" id="R-DME-8940973">
    <property type="pathway name" value="RUNX2 regulates osteoblast differentiation"/>
</dbReference>
<dbReference type="Reactome" id="R-DME-8941326">
    <property type="pathway name" value="RUNX2 regulates bone development"/>
</dbReference>
<dbReference type="Reactome" id="R-DME-8941855">
    <property type="pathway name" value="RUNX3 regulates CDKN1A transcription"/>
</dbReference>
<dbReference type="Reactome" id="R-DME-8941858">
    <property type="pathway name" value="Regulation of RUNX3 expression and activity"/>
</dbReference>
<dbReference type="Reactome" id="R-DME-8951430">
    <property type="pathway name" value="RUNX3 regulates WNT signaling"/>
</dbReference>
<dbReference type="Reactome" id="R-DME-8951936">
    <property type="pathway name" value="RUNX3 regulates p14-ARF"/>
</dbReference>
<dbReference type="SignaLink" id="Q9W349"/>
<dbReference type="BioGRID-ORCS" id="31883">
    <property type="hits" value="0 hits in 3 CRISPR screens"/>
</dbReference>
<dbReference type="GenomeRNAi" id="31883"/>
<dbReference type="PRO" id="PR:Q9W349"/>
<dbReference type="Proteomes" id="UP000000803">
    <property type="component" value="Chromosome X"/>
</dbReference>
<dbReference type="Bgee" id="FBgn0002576">
    <property type="expression patterns" value="Expressed in crystal cell in dorsal vessel heart and 14 other cell types or tissues"/>
</dbReference>
<dbReference type="ExpressionAtlas" id="Q9W349">
    <property type="expression patterns" value="baseline and differential"/>
</dbReference>
<dbReference type="GO" id="GO:0005634">
    <property type="term" value="C:nucleus"/>
    <property type="evidence" value="ECO:0000314"/>
    <property type="project" value="FlyBase"/>
</dbReference>
<dbReference type="GO" id="GO:0005524">
    <property type="term" value="F:ATP binding"/>
    <property type="evidence" value="ECO:0007669"/>
    <property type="project" value="InterPro"/>
</dbReference>
<dbReference type="GO" id="GO:0003677">
    <property type="term" value="F:DNA binding"/>
    <property type="evidence" value="ECO:0000314"/>
    <property type="project" value="UniProtKB"/>
</dbReference>
<dbReference type="GO" id="GO:0003700">
    <property type="term" value="F:DNA-binding transcription factor activity"/>
    <property type="evidence" value="ECO:0000250"/>
    <property type="project" value="FlyBase"/>
</dbReference>
<dbReference type="GO" id="GO:0000981">
    <property type="term" value="F:DNA-binding transcription factor activity, RNA polymerase II-specific"/>
    <property type="evidence" value="ECO:0000318"/>
    <property type="project" value="GO_Central"/>
</dbReference>
<dbReference type="GO" id="GO:0000978">
    <property type="term" value="F:RNA polymerase II cis-regulatory region sequence-specific DNA binding"/>
    <property type="evidence" value="ECO:0000318"/>
    <property type="project" value="GO_Central"/>
</dbReference>
<dbReference type="GO" id="GO:0043565">
    <property type="term" value="F:sequence-specific DNA binding"/>
    <property type="evidence" value="ECO:0000314"/>
    <property type="project" value="FlyBase"/>
</dbReference>
<dbReference type="GO" id="GO:0000976">
    <property type="term" value="F:transcription cis-regulatory region binding"/>
    <property type="evidence" value="ECO:0000314"/>
    <property type="project" value="FlyBase"/>
</dbReference>
<dbReference type="GO" id="GO:0007469">
    <property type="term" value="P:antennal development"/>
    <property type="evidence" value="ECO:0000304"/>
    <property type="project" value="FlyBase"/>
</dbReference>
<dbReference type="GO" id="GO:0042675">
    <property type="term" value="P:compound eye cone cell differentiation"/>
    <property type="evidence" value="ECO:0000315"/>
    <property type="project" value="FlyBase"/>
</dbReference>
<dbReference type="GO" id="GO:0048749">
    <property type="term" value="P:compound eye development"/>
    <property type="evidence" value="ECO:0000315"/>
    <property type="project" value="FlyBase"/>
</dbReference>
<dbReference type="GO" id="GO:0042688">
    <property type="term" value="P:crystal cell differentiation"/>
    <property type="evidence" value="ECO:0000315"/>
    <property type="project" value="FlyBase"/>
</dbReference>
<dbReference type="GO" id="GO:0035165">
    <property type="term" value="P:embryonic crystal cell differentiation"/>
    <property type="evidence" value="ECO:0000315"/>
    <property type="project" value="FlyBase"/>
</dbReference>
<dbReference type="GO" id="GO:0035163">
    <property type="term" value="P:embryonic hemocyte differentiation"/>
    <property type="evidence" value="ECO:0000315"/>
    <property type="project" value="FlyBase"/>
</dbReference>
<dbReference type="GO" id="GO:0035162">
    <property type="term" value="P:embryonic hemopoiesis"/>
    <property type="evidence" value="ECO:0000315"/>
    <property type="project" value="FlyBase"/>
</dbReference>
<dbReference type="GO" id="GO:0048592">
    <property type="term" value="P:eye morphogenesis"/>
    <property type="evidence" value="ECO:0000315"/>
    <property type="project" value="FlyBase"/>
</dbReference>
<dbReference type="GO" id="GO:0007486">
    <property type="term" value="P:imaginal disc-derived female genitalia development"/>
    <property type="evidence" value="ECO:0000315"/>
    <property type="project" value="FlyBase"/>
</dbReference>
<dbReference type="GO" id="GO:0035168">
    <property type="term" value="P:larval lymph gland hemocyte differentiation"/>
    <property type="evidence" value="ECO:0000304"/>
    <property type="project" value="FlyBase"/>
</dbReference>
<dbReference type="GO" id="GO:0000122">
    <property type="term" value="P:negative regulation of transcription by RNA polymerase II"/>
    <property type="evidence" value="ECO:0000316"/>
    <property type="project" value="FlyBase"/>
</dbReference>
<dbReference type="GO" id="GO:0046672">
    <property type="term" value="P:positive regulation of compound eye retinal cell programmed cell death"/>
    <property type="evidence" value="ECO:0000315"/>
    <property type="project" value="UniProtKB"/>
</dbReference>
<dbReference type="GO" id="GO:0042691">
    <property type="term" value="P:positive regulation of crystal cell differentiation"/>
    <property type="evidence" value="ECO:0000315"/>
    <property type="project" value="FlyBase"/>
</dbReference>
<dbReference type="GO" id="GO:0045944">
    <property type="term" value="P:positive regulation of transcription by RNA polymerase II"/>
    <property type="evidence" value="ECO:0000315"/>
    <property type="project" value="UniProtKB"/>
</dbReference>
<dbReference type="GO" id="GO:0045467">
    <property type="term" value="P:R7 cell development"/>
    <property type="evidence" value="ECO:0000315"/>
    <property type="project" value="FlyBase"/>
</dbReference>
<dbReference type="GO" id="GO:0035314">
    <property type="term" value="P:scab formation"/>
    <property type="evidence" value="ECO:0000315"/>
    <property type="project" value="FlyBase"/>
</dbReference>
<dbReference type="GO" id="GO:0016360">
    <property type="term" value="P:sensory organ precursor cell fate determination"/>
    <property type="evidence" value="ECO:0000304"/>
    <property type="project" value="FlyBase"/>
</dbReference>
<dbReference type="GO" id="GO:0035211">
    <property type="term" value="P:spermathecum morphogenesis"/>
    <property type="evidence" value="ECO:0000304"/>
    <property type="project" value="FlyBase"/>
</dbReference>
<dbReference type="GO" id="GO:0042060">
    <property type="term" value="P:wound healing"/>
    <property type="evidence" value="ECO:0000315"/>
    <property type="project" value="FlyBase"/>
</dbReference>
<dbReference type="FunFam" id="2.60.40.720:FF:000001">
    <property type="entry name" value="Runt-related transcription factor"/>
    <property type="match status" value="1"/>
</dbReference>
<dbReference type="Gene3D" id="2.60.40.720">
    <property type="match status" value="1"/>
</dbReference>
<dbReference type="InterPro" id="IPR000040">
    <property type="entry name" value="AML1_Runt"/>
</dbReference>
<dbReference type="InterPro" id="IPR008967">
    <property type="entry name" value="p53-like_TF_DNA-bd_sf"/>
</dbReference>
<dbReference type="InterPro" id="IPR012346">
    <property type="entry name" value="p53/RUNT-type_TF_DNA-bd_sf"/>
</dbReference>
<dbReference type="InterPro" id="IPR013524">
    <property type="entry name" value="Runt_dom"/>
</dbReference>
<dbReference type="PANTHER" id="PTHR11950:SF49">
    <property type="entry name" value="PROTEIN LOZENGE"/>
    <property type="match status" value="1"/>
</dbReference>
<dbReference type="PANTHER" id="PTHR11950">
    <property type="entry name" value="RUNT RELATED"/>
    <property type="match status" value="1"/>
</dbReference>
<dbReference type="Pfam" id="PF00853">
    <property type="entry name" value="Runt"/>
    <property type="match status" value="1"/>
</dbReference>
<dbReference type="PRINTS" id="PR00967">
    <property type="entry name" value="ONCOGENEAML1"/>
</dbReference>
<dbReference type="SUPFAM" id="SSF49417">
    <property type="entry name" value="p53-like transcription factors"/>
    <property type="match status" value="1"/>
</dbReference>
<dbReference type="PROSITE" id="PS51062">
    <property type="entry name" value="RUNT"/>
    <property type="match status" value="1"/>
</dbReference>